<evidence type="ECO:0000255" key="1">
    <source>
        <dbReference type="PROSITE-ProRule" id="PRU00258"/>
    </source>
</evidence>
<evidence type="ECO:0000305" key="2"/>
<protein>
    <recommendedName>
        <fullName>Polyketide-8 synthase acyl carrier protein 1</fullName>
        <shortName>ACP 1</shortName>
    </recommendedName>
</protein>
<accession>Q93HD3</accession>
<feature type="chain" id="PRO_0000180258" description="Polyketide-8 synthase acyl carrier protein 1">
    <location>
        <begin position="1"/>
        <end position="84"/>
    </location>
</feature>
<feature type="domain" description="Carrier" evidence="1">
    <location>
        <begin position="7"/>
        <end position="82"/>
    </location>
</feature>
<feature type="modified residue" description="O-(pantetheine 4'-phosphoryl)serine" evidence="1">
    <location>
        <position position="42"/>
    </location>
</feature>
<keyword id="KW-0596">Phosphopantetheine</keyword>
<keyword id="KW-0597">Phosphoprotein</keyword>
<keyword id="KW-1185">Reference proteome</keyword>
<sequence>MTTGLDAARKQEIKEIVCDILEIDEDEVTETSLFKEQHDADSLRAIEILAALERTQKVTIDQAELSRMVNLEGVYVVVSEAAQN</sequence>
<gene>
    <name type="ordered locus">SAV_3666</name>
</gene>
<organism>
    <name type="scientific">Streptomyces avermitilis (strain ATCC 31267 / DSM 46492 / JCM 5070 / NBRC 14893 / NCIMB 12804 / NRRL 8165 / MA-4680)</name>
    <dbReference type="NCBI Taxonomy" id="227882"/>
    <lineage>
        <taxon>Bacteria</taxon>
        <taxon>Bacillati</taxon>
        <taxon>Actinomycetota</taxon>
        <taxon>Actinomycetes</taxon>
        <taxon>Kitasatosporales</taxon>
        <taxon>Streptomycetaceae</taxon>
        <taxon>Streptomyces</taxon>
    </lineage>
</organism>
<comment type="function">
    <text>Acyl carrier protein.</text>
</comment>
<comment type="PTM">
    <text evidence="2">4'-phosphopantetheine is transferred from CoA to a specific serine of the apo-ACP-like protein.</text>
</comment>
<name>ACPX_STRAW</name>
<dbReference type="EMBL" id="AB070946">
    <property type="protein sequence ID" value="BAB69255.1"/>
    <property type="molecule type" value="Genomic_DNA"/>
</dbReference>
<dbReference type="EMBL" id="BA000030">
    <property type="protein sequence ID" value="BAC71378.1"/>
    <property type="molecule type" value="Genomic_DNA"/>
</dbReference>
<dbReference type="SMR" id="Q93HD3"/>
<dbReference type="KEGG" id="sma:SAVERM_3666"/>
<dbReference type="eggNOG" id="COG0236">
    <property type="taxonomic scope" value="Bacteria"/>
</dbReference>
<dbReference type="HOGENOM" id="CLU_108696_7_1_11"/>
<dbReference type="Proteomes" id="UP000000428">
    <property type="component" value="Chromosome"/>
</dbReference>
<dbReference type="Gene3D" id="1.10.1200.10">
    <property type="entry name" value="ACP-like"/>
    <property type="match status" value="1"/>
</dbReference>
<dbReference type="InterPro" id="IPR036736">
    <property type="entry name" value="ACP-like_sf"/>
</dbReference>
<dbReference type="InterPro" id="IPR009081">
    <property type="entry name" value="PP-bd_ACP"/>
</dbReference>
<dbReference type="Pfam" id="PF00550">
    <property type="entry name" value="PP-binding"/>
    <property type="match status" value="1"/>
</dbReference>
<dbReference type="SUPFAM" id="SSF47336">
    <property type="entry name" value="ACP-like"/>
    <property type="match status" value="1"/>
</dbReference>
<dbReference type="PROSITE" id="PS50075">
    <property type="entry name" value="CARRIER"/>
    <property type="match status" value="1"/>
</dbReference>
<proteinExistence type="inferred from homology"/>
<reference key="1">
    <citation type="journal article" date="2001" name="Proc. Natl. Acad. Sci. U.S.A.">
        <title>Genome sequence of an industrial microorganism Streptomyces avermitilis: deducing the ability of producing secondary metabolites.</title>
        <authorList>
            <person name="Omura S."/>
            <person name="Ikeda H."/>
            <person name="Ishikawa J."/>
            <person name="Hanamoto A."/>
            <person name="Takahashi C."/>
            <person name="Shinose M."/>
            <person name="Takahashi Y."/>
            <person name="Horikawa H."/>
            <person name="Nakazawa H."/>
            <person name="Osonoe T."/>
            <person name="Kikuchi H."/>
            <person name="Shiba T."/>
            <person name="Sakaki Y."/>
            <person name="Hattori M."/>
        </authorList>
    </citation>
    <scope>NUCLEOTIDE SEQUENCE [LARGE SCALE GENOMIC DNA]</scope>
    <source>
        <strain>ATCC 31267 / DSM 46492 / JCM 5070 / NBRC 14893 / NCIMB 12804 / NRRL 8165 / MA-4680</strain>
    </source>
</reference>
<reference key="2">
    <citation type="journal article" date="2003" name="Nat. Biotechnol.">
        <title>Complete genome sequence and comparative analysis of the industrial microorganism Streptomyces avermitilis.</title>
        <authorList>
            <person name="Ikeda H."/>
            <person name="Ishikawa J."/>
            <person name="Hanamoto A."/>
            <person name="Shinose M."/>
            <person name="Kikuchi H."/>
            <person name="Shiba T."/>
            <person name="Sakaki Y."/>
            <person name="Hattori M."/>
            <person name="Omura S."/>
        </authorList>
    </citation>
    <scope>NUCLEOTIDE SEQUENCE [LARGE SCALE GENOMIC DNA]</scope>
    <source>
        <strain>ATCC 31267 / DSM 46492 / JCM 5070 / NBRC 14893 / NCIMB 12804 / NRRL 8165 / MA-4680</strain>
    </source>
</reference>